<organism>
    <name type="scientific">Chlamydia pneumoniae</name>
    <name type="common">Chlamydophila pneumoniae</name>
    <dbReference type="NCBI Taxonomy" id="83558"/>
    <lineage>
        <taxon>Bacteria</taxon>
        <taxon>Pseudomonadati</taxon>
        <taxon>Chlamydiota</taxon>
        <taxon>Chlamydiia</taxon>
        <taxon>Chlamydiales</taxon>
        <taxon>Chlamydiaceae</taxon>
        <taxon>Chlamydia/Chlamydophila group</taxon>
        <taxon>Chlamydia</taxon>
    </lineage>
</organism>
<proteinExistence type="inferred from homology"/>
<dbReference type="EC" id="3.6.5.n1" evidence="1"/>
<dbReference type="EMBL" id="AE001363">
    <property type="protein sequence ID" value="AAD18503.1"/>
    <property type="molecule type" value="Genomic_DNA"/>
</dbReference>
<dbReference type="EMBL" id="AE002161">
    <property type="protein sequence ID" value="AAF38244.1"/>
    <property type="molecule type" value="Genomic_DNA"/>
</dbReference>
<dbReference type="EMBL" id="BA000008">
    <property type="protein sequence ID" value="BAA98567.1"/>
    <property type="molecule type" value="Genomic_DNA"/>
</dbReference>
<dbReference type="EMBL" id="AE009440">
    <property type="protein sequence ID" value="AAP98299.1"/>
    <property type="molecule type" value="Genomic_DNA"/>
</dbReference>
<dbReference type="PIR" id="B72088">
    <property type="entry name" value="B72088"/>
</dbReference>
<dbReference type="PIR" id="E86535">
    <property type="entry name" value="E86535"/>
</dbReference>
<dbReference type="RefSeq" id="NP_224559.1">
    <property type="nucleotide sequence ID" value="NC_000922.1"/>
</dbReference>
<dbReference type="RefSeq" id="WP_010883002.1">
    <property type="nucleotide sequence ID" value="NZ_LN847257.1"/>
</dbReference>
<dbReference type="SMR" id="Q9Z8I4"/>
<dbReference type="STRING" id="406984.CPK_ORF00867"/>
<dbReference type="GeneID" id="45050404"/>
<dbReference type="KEGG" id="cpa:CP_0399"/>
<dbReference type="KEGG" id="cpj:lepA"/>
<dbReference type="KEGG" id="cpn:CPn_0359"/>
<dbReference type="KEGG" id="cpt:CpB0368"/>
<dbReference type="PATRIC" id="fig|115713.3.peg.397"/>
<dbReference type="eggNOG" id="COG0481">
    <property type="taxonomic scope" value="Bacteria"/>
</dbReference>
<dbReference type="HOGENOM" id="CLU_009995_3_3_0"/>
<dbReference type="OrthoDB" id="9804431at2"/>
<dbReference type="Proteomes" id="UP000000583">
    <property type="component" value="Chromosome"/>
</dbReference>
<dbReference type="Proteomes" id="UP000000801">
    <property type="component" value="Chromosome"/>
</dbReference>
<dbReference type="GO" id="GO:0005886">
    <property type="term" value="C:plasma membrane"/>
    <property type="evidence" value="ECO:0007669"/>
    <property type="project" value="UniProtKB-SubCell"/>
</dbReference>
<dbReference type="GO" id="GO:0005525">
    <property type="term" value="F:GTP binding"/>
    <property type="evidence" value="ECO:0007669"/>
    <property type="project" value="UniProtKB-UniRule"/>
</dbReference>
<dbReference type="GO" id="GO:0003924">
    <property type="term" value="F:GTPase activity"/>
    <property type="evidence" value="ECO:0007669"/>
    <property type="project" value="UniProtKB-UniRule"/>
</dbReference>
<dbReference type="GO" id="GO:0043022">
    <property type="term" value="F:ribosome binding"/>
    <property type="evidence" value="ECO:0007669"/>
    <property type="project" value="UniProtKB-UniRule"/>
</dbReference>
<dbReference type="GO" id="GO:0003746">
    <property type="term" value="F:translation elongation factor activity"/>
    <property type="evidence" value="ECO:0007669"/>
    <property type="project" value="UniProtKB-UniRule"/>
</dbReference>
<dbReference type="GO" id="GO:0045727">
    <property type="term" value="P:positive regulation of translation"/>
    <property type="evidence" value="ECO:0007669"/>
    <property type="project" value="UniProtKB-UniRule"/>
</dbReference>
<dbReference type="CDD" id="cd03699">
    <property type="entry name" value="EF4_II"/>
    <property type="match status" value="1"/>
</dbReference>
<dbReference type="CDD" id="cd16260">
    <property type="entry name" value="EF4_III"/>
    <property type="match status" value="1"/>
</dbReference>
<dbReference type="CDD" id="cd01890">
    <property type="entry name" value="LepA"/>
    <property type="match status" value="1"/>
</dbReference>
<dbReference type="CDD" id="cd03709">
    <property type="entry name" value="lepA_C"/>
    <property type="match status" value="1"/>
</dbReference>
<dbReference type="FunFam" id="3.40.50.300:FF:000078">
    <property type="entry name" value="Elongation factor 4"/>
    <property type="match status" value="1"/>
</dbReference>
<dbReference type="FunFam" id="2.40.30.10:FF:000015">
    <property type="entry name" value="Translation factor GUF1, mitochondrial"/>
    <property type="match status" value="1"/>
</dbReference>
<dbReference type="FunFam" id="3.30.70.240:FF:000007">
    <property type="entry name" value="Translation factor GUF1, mitochondrial"/>
    <property type="match status" value="1"/>
</dbReference>
<dbReference type="FunFam" id="3.30.70.2570:FF:000001">
    <property type="entry name" value="Translation factor GUF1, mitochondrial"/>
    <property type="match status" value="1"/>
</dbReference>
<dbReference type="FunFam" id="3.30.70.870:FF:000004">
    <property type="entry name" value="Translation factor GUF1, mitochondrial"/>
    <property type="match status" value="1"/>
</dbReference>
<dbReference type="Gene3D" id="3.30.70.240">
    <property type="match status" value="1"/>
</dbReference>
<dbReference type="Gene3D" id="3.30.70.2570">
    <property type="entry name" value="Elongation factor 4, C-terminal domain"/>
    <property type="match status" value="1"/>
</dbReference>
<dbReference type="Gene3D" id="3.30.70.870">
    <property type="entry name" value="Elongation Factor G (Translational Gtpase), domain 3"/>
    <property type="match status" value="1"/>
</dbReference>
<dbReference type="Gene3D" id="3.40.50.300">
    <property type="entry name" value="P-loop containing nucleotide triphosphate hydrolases"/>
    <property type="match status" value="1"/>
</dbReference>
<dbReference type="Gene3D" id="2.40.30.10">
    <property type="entry name" value="Translation factors"/>
    <property type="match status" value="1"/>
</dbReference>
<dbReference type="HAMAP" id="MF_00071">
    <property type="entry name" value="LepA"/>
    <property type="match status" value="1"/>
</dbReference>
<dbReference type="InterPro" id="IPR006297">
    <property type="entry name" value="EF-4"/>
</dbReference>
<dbReference type="InterPro" id="IPR035647">
    <property type="entry name" value="EFG_III/V"/>
</dbReference>
<dbReference type="InterPro" id="IPR000640">
    <property type="entry name" value="EFG_V-like"/>
</dbReference>
<dbReference type="InterPro" id="IPR004161">
    <property type="entry name" value="EFTu-like_2"/>
</dbReference>
<dbReference type="InterPro" id="IPR038363">
    <property type="entry name" value="LepA_C_sf"/>
</dbReference>
<dbReference type="InterPro" id="IPR013842">
    <property type="entry name" value="LepA_CTD"/>
</dbReference>
<dbReference type="InterPro" id="IPR035654">
    <property type="entry name" value="LepA_IV"/>
</dbReference>
<dbReference type="InterPro" id="IPR027417">
    <property type="entry name" value="P-loop_NTPase"/>
</dbReference>
<dbReference type="InterPro" id="IPR005225">
    <property type="entry name" value="Small_GTP-bd"/>
</dbReference>
<dbReference type="InterPro" id="IPR000795">
    <property type="entry name" value="T_Tr_GTP-bd_dom"/>
</dbReference>
<dbReference type="InterPro" id="IPR009000">
    <property type="entry name" value="Transl_B-barrel_sf"/>
</dbReference>
<dbReference type="NCBIfam" id="TIGR01393">
    <property type="entry name" value="lepA"/>
    <property type="match status" value="1"/>
</dbReference>
<dbReference type="NCBIfam" id="TIGR00231">
    <property type="entry name" value="small_GTP"/>
    <property type="match status" value="1"/>
</dbReference>
<dbReference type="PANTHER" id="PTHR43512:SF4">
    <property type="entry name" value="TRANSLATION FACTOR GUF1 HOMOLOG, CHLOROPLASTIC"/>
    <property type="match status" value="1"/>
</dbReference>
<dbReference type="PANTHER" id="PTHR43512">
    <property type="entry name" value="TRANSLATION FACTOR GUF1-RELATED"/>
    <property type="match status" value="1"/>
</dbReference>
<dbReference type="Pfam" id="PF00679">
    <property type="entry name" value="EFG_C"/>
    <property type="match status" value="1"/>
</dbReference>
<dbReference type="Pfam" id="PF00009">
    <property type="entry name" value="GTP_EFTU"/>
    <property type="match status" value="1"/>
</dbReference>
<dbReference type="Pfam" id="PF03144">
    <property type="entry name" value="GTP_EFTU_D2"/>
    <property type="match status" value="1"/>
</dbReference>
<dbReference type="Pfam" id="PF06421">
    <property type="entry name" value="LepA_C"/>
    <property type="match status" value="1"/>
</dbReference>
<dbReference type="PRINTS" id="PR00315">
    <property type="entry name" value="ELONGATNFCT"/>
</dbReference>
<dbReference type="SUPFAM" id="SSF54980">
    <property type="entry name" value="EF-G C-terminal domain-like"/>
    <property type="match status" value="2"/>
</dbReference>
<dbReference type="SUPFAM" id="SSF52540">
    <property type="entry name" value="P-loop containing nucleoside triphosphate hydrolases"/>
    <property type="match status" value="1"/>
</dbReference>
<dbReference type="SUPFAM" id="SSF50447">
    <property type="entry name" value="Translation proteins"/>
    <property type="match status" value="1"/>
</dbReference>
<dbReference type="PROSITE" id="PS51722">
    <property type="entry name" value="G_TR_2"/>
    <property type="match status" value="1"/>
</dbReference>
<sequence length="602" mass="67286">MKEYKIENIRNFSIIAHIDHGKSTIADRLLESTSTVEEREMREQLLDSMDLERERGITIKAHPVTMTYLYEGEVYQLNLIDTPGHVDFSYEVSRSLSACEGALLIVDAAQGVQAQSLANVYLALERDLEIIPVLNKIDLPAADPVRIAQQIEDYIGLDTTNIIACSAKTGQGIPAILKAIIDLVPPPKAPAETELKALVFDSHYDPYVGIMVYVRIISGELKKGDRITFMAAKGSSFEVLGIGAFLPKATFIEGSLRPGQVGFFIANLKKVKDVKIGDTVTKTKHPAKTPLEGFKEINPVVFAGIYPIDSSDFDTLKDALGRLQLNDSALTIEQESSHSLGFGFRCGFLGLLHLEIIFERIIREFDLDIIATAPSVIYKVVLKNGKVLDIDNPSGYPDPAIIEHVEEPWVHVNIITPQEYLSNIMNLCLDKRGICVKTEMLDQHRLVLAYELPLNEIVSDFNDKLKSVTKGYGSFDYRLGDYRKGSIIKLEVLINEEPIDAFSCLVHRDKAESRGRSICEKLVDVIPQQLFKIPIQAAINKKVIARETIRALSKNVTAKCYGGDITRKRKLWEKQKKGKKRMKEFGKVSIPNTAFIEVLKLD</sequence>
<reference key="1">
    <citation type="journal article" date="1999" name="Nat. Genet.">
        <title>Comparative genomes of Chlamydia pneumoniae and C. trachomatis.</title>
        <authorList>
            <person name="Kalman S."/>
            <person name="Mitchell W.P."/>
            <person name="Marathe R."/>
            <person name="Lammel C.J."/>
            <person name="Fan J."/>
            <person name="Hyman R.W."/>
            <person name="Olinger L."/>
            <person name="Grimwood J."/>
            <person name="Davis R.W."/>
            <person name="Stephens R.S."/>
        </authorList>
    </citation>
    <scope>NUCLEOTIDE SEQUENCE [LARGE SCALE GENOMIC DNA]</scope>
    <source>
        <strain>CWL029</strain>
    </source>
</reference>
<reference key="2">
    <citation type="journal article" date="2000" name="Nucleic Acids Res.">
        <title>Genome sequences of Chlamydia trachomatis MoPn and Chlamydia pneumoniae AR39.</title>
        <authorList>
            <person name="Read T.D."/>
            <person name="Brunham R.C."/>
            <person name="Shen C."/>
            <person name="Gill S.R."/>
            <person name="Heidelberg J.F."/>
            <person name="White O."/>
            <person name="Hickey E.K."/>
            <person name="Peterson J.D."/>
            <person name="Utterback T.R."/>
            <person name="Berry K.J."/>
            <person name="Bass S."/>
            <person name="Linher K.D."/>
            <person name="Weidman J.F."/>
            <person name="Khouri H.M."/>
            <person name="Craven B."/>
            <person name="Bowman C."/>
            <person name="Dodson R.J."/>
            <person name="Gwinn M.L."/>
            <person name="Nelson W.C."/>
            <person name="DeBoy R.T."/>
            <person name="Kolonay J.F."/>
            <person name="McClarty G."/>
            <person name="Salzberg S.L."/>
            <person name="Eisen J.A."/>
            <person name="Fraser C.M."/>
        </authorList>
    </citation>
    <scope>NUCLEOTIDE SEQUENCE [LARGE SCALE GENOMIC DNA]</scope>
    <source>
        <strain>AR39</strain>
    </source>
</reference>
<reference key="3">
    <citation type="journal article" date="2000" name="Nucleic Acids Res.">
        <title>Comparison of whole genome sequences of Chlamydia pneumoniae J138 from Japan and CWL029 from USA.</title>
        <authorList>
            <person name="Shirai M."/>
            <person name="Hirakawa H."/>
            <person name="Kimoto M."/>
            <person name="Tabuchi M."/>
            <person name="Kishi F."/>
            <person name="Ouchi K."/>
            <person name="Shiba T."/>
            <person name="Ishii K."/>
            <person name="Hattori M."/>
            <person name="Kuhara S."/>
            <person name="Nakazawa T."/>
        </authorList>
    </citation>
    <scope>NUCLEOTIDE SEQUENCE [LARGE SCALE GENOMIC DNA]</scope>
    <source>
        <strain>J138</strain>
    </source>
</reference>
<reference key="4">
    <citation type="submission" date="2002-05" db="EMBL/GenBank/DDBJ databases">
        <title>The genome sequence of Chlamydia pneumoniae TW183 and comparison with other Chlamydia strains based on whole genome sequence analysis.</title>
        <authorList>
            <person name="Geng M.M."/>
            <person name="Schuhmacher A."/>
            <person name="Muehldorfer I."/>
            <person name="Bensch K.W."/>
            <person name="Schaefer K.P."/>
            <person name="Schneider S."/>
            <person name="Pohl T."/>
            <person name="Essig A."/>
            <person name="Marre R."/>
            <person name="Melchers K."/>
        </authorList>
    </citation>
    <scope>NUCLEOTIDE SEQUENCE [LARGE SCALE GENOMIC DNA]</scope>
    <source>
        <strain>TW-183</strain>
    </source>
</reference>
<protein>
    <recommendedName>
        <fullName evidence="1">Elongation factor 4</fullName>
        <shortName evidence="1">EF-4</shortName>
        <ecNumber evidence="1">3.6.5.n1</ecNumber>
    </recommendedName>
    <alternativeName>
        <fullName evidence="1">Ribosomal back-translocase LepA</fullName>
    </alternativeName>
</protein>
<accession>Q9Z8I4</accession>
<accession>Q9JQJ3</accession>
<evidence type="ECO:0000255" key="1">
    <source>
        <dbReference type="HAMAP-Rule" id="MF_00071"/>
    </source>
</evidence>
<keyword id="KW-0997">Cell inner membrane</keyword>
<keyword id="KW-1003">Cell membrane</keyword>
<keyword id="KW-0342">GTP-binding</keyword>
<keyword id="KW-0378">Hydrolase</keyword>
<keyword id="KW-0472">Membrane</keyword>
<keyword id="KW-0547">Nucleotide-binding</keyword>
<keyword id="KW-0648">Protein biosynthesis</keyword>
<name>LEPA_CHLPN</name>
<comment type="function">
    <text evidence="1">Required for accurate and efficient protein synthesis under certain stress conditions. May act as a fidelity factor of the translation reaction, by catalyzing a one-codon backward translocation of tRNAs on improperly translocated ribosomes. Back-translocation proceeds from a post-translocation (POST) complex to a pre-translocation (PRE) complex, thus giving elongation factor G a second chance to translocate the tRNAs correctly. Binds to ribosomes in a GTP-dependent manner.</text>
</comment>
<comment type="catalytic activity">
    <reaction evidence="1">
        <text>GTP + H2O = GDP + phosphate + H(+)</text>
        <dbReference type="Rhea" id="RHEA:19669"/>
        <dbReference type="ChEBI" id="CHEBI:15377"/>
        <dbReference type="ChEBI" id="CHEBI:15378"/>
        <dbReference type="ChEBI" id="CHEBI:37565"/>
        <dbReference type="ChEBI" id="CHEBI:43474"/>
        <dbReference type="ChEBI" id="CHEBI:58189"/>
        <dbReference type="EC" id="3.6.5.n1"/>
    </reaction>
</comment>
<comment type="subcellular location">
    <subcellularLocation>
        <location evidence="1">Cell inner membrane</location>
        <topology evidence="1">Peripheral membrane protein</topology>
        <orientation evidence="1">Cytoplasmic side</orientation>
    </subcellularLocation>
</comment>
<comment type="similarity">
    <text evidence="1">Belongs to the TRAFAC class translation factor GTPase superfamily. Classic translation factor GTPase family. LepA subfamily.</text>
</comment>
<gene>
    <name evidence="1" type="primary">lepA</name>
    <name type="ordered locus">CPn_0359</name>
    <name type="ordered locus">CP_0399</name>
    <name type="ordered locus">CpB0368</name>
</gene>
<feature type="chain" id="PRO_0000176257" description="Elongation factor 4">
    <location>
        <begin position="1"/>
        <end position="602"/>
    </location>
</feature>
<feature type="domain" description="tr-type G">
    <location>
        <begin position="7"/>
        <end position="188"/>
    </location>
</feature>
<feature type="binding site" evidence="1">
    <location>
        <begin position="19"/>
        <end position="24"/>
    </location>
    <ligand>
        <name>GTP</name>
        <dbReference type="ChEBI" id="CHEBI:37565"/>
    </ligand>
</feature>
<feature type="binding site" evidence="1">
    <location>
        <begin position="135"/>
        <end position="138"/>
    </location>
    <ligand>
        <name>GTP</name>
        <dbReference type="ChEBI" id="CHEBI:37565"/>
    </ligand>
</feature>